<protein>
    <recommendedName>
        <fullName>Chalcone synthase 2</fullName>
        <ecNumber>2.3.1.74</ecNumber>
    </recommendedName>
    <alternativeName>
        <fullName>Naringenin-chalcone synthase 2</fullName>
    </alternativeName>
</protein>
<sequence length="393" mass="42973">MAAVTVEEIRKAQRADGPAAVLAIGTATPANYVTQADYPDYYFRITKSEHMTELKEKFKRMCDKSMIRKRYMYLTEDILKENPNMCAYMAPSLDARQDIVVVEVPKLGKEAAVKAIKEWGQPKSKITHLIFCTTSGVDMPGCDYQLTKLLGLRPSVKRFMMYQQGCFAGGTVLRLAKDLAENNRGARVLVVCSEITAVTFRGPADTHLDSLVGQALFGDGAAAVIVGADPNESIERPLYQLVSAAQTILPDSDGAIDGHLREVGLTFHLLKDVPGLISKNIEKSLKEAFGPIGISDWNSIFWIAHPGGPAILDQVEAKLGLKEEKLRATRQVLSEYGNMSSACVLFILDEMRKKCAEEGRATTGEGLDWGVLFGFGPGLTVETVVLRSVPINA</sequence>
<accession>Q9FSB8</accession>
<name>CHS2_RUTGR</name>
<proteinExistence type="evidence at transcript level"/>
<comment type="function">
    <text>The primary product of this enzyme is 4,2',4',6'-tetrahydroxychalcone (also termed naringenin-chalcone or chalcone) which can under specific conditions spontaneously isomerize into naringenin.</text>
</comment>
<comment type="catalytic activity">
    <reaction evidence="1">
        <text>(E)-4-coumaroyl-CoA + 3 malonyl-CoA + 3 H(+) = 2',4,4',6'-tetrahydroxychalcone + 3 CO2 + 4 CoA</text>
        <dbReference type="Rhea" id="RHEA:11128"/>
        <dbReference type="ChEBI" id="CHEBI:15378"/>
        <dbReference type="ChEBI" id="CHEBI:15413"/>
        <dbReference type="ChEBI" id="CHEBI:16526"/>
        <dbReference type="ChEBI" id="CHEBI:57287"/>
        <dbReference type="ChEBI" id="CHEBI:57384"/>
        <dbReference type="ChEBI" id="CHEBI:85008"/>
        <dbReference type="EC" id="2.3.1.74"/>
    </reaction>
</comment>
<comment type="pathway">
    <text>Secondary metabolite biosynthesis; flavonoid biosynthesis.</text>
</comment>
<comment type="similarity">
    <text evidence="2">Belongs to the thiolase-like superfamily. Chalcone/stilbene synthases family.</text>
</comment>
<gene>
    <name type="primary">CHS2</name>
</gene>
<reference key="1">
    <citation type="journal article" date="2000" name="Eur. J. Biochem.">
        <title>Specificities of functionally expressed chalcone and acridone synthases from Ruta graveolens.</title>
        <authorList>
            <person name="Springob K."/>
            <person name="Lukacin R."/>
            <person name="Ernwein C."/>
            <person name="Groening I."/>
            <person name="Matern U."/>
        </authorList>
    </citation>
    <scope>NUCLEOTIDE SEQUENCE [MRNA]</scope>
    <source>
        <tissue>Immature flower</tissue>
    </source>
</reference>
<evidence type="ECO:0000255" key="1">
    <source>
        <dbReference type="PROSITE-ProRule" id="PRU10023"/>
    </source>
</evidence>
<evidence type="ECO:0000305" key="2"/>
<organism>
    <name type="scientific">Ruta graveolens</name>
    <name type="common">Common rue</name>
    <dbReference type="NCBI Taxonomy" id="37565"/>
    <lineage>
        <taxon>Eukaryota</taxon>
        <taxon>Viridiplantae</taxon>
        <taxon>Streptophyta</taxon>
        <taxon>Embryophyta</taxon>
        <taxon>Tracheophyta</taxon>
        <taxon>Spermatophyta</taxon>
        <taxon>Magnoliopsida</taxon>
        <taxon>eudicotyledons</taxon>
        <taxon>Gunneridae</taxon>
        <taxon>Pentapetalae</taxon>
        <taxon>rosids</taxon>
        <taxon>malvids</taxon>
        <taxon>Sapindales</taxon>
        <taxon>Rutaceae</taxon>
        <taxon>Rutoideae</taxon>
        <taxon>Ruta</taxon>
    </lineage>
</organism>
<keyword id="KW-0012">Acyltransferase</keyword>
<keyword id="KW-0284">Flavonoid biosynthesis</keyword>
<keyword id="KW-0808">Transferase</keyword>
<feature type="chain" id="PRO_0000216046" description="Chalcone synthase 2">
    <location>
        <begin position="1"/>
        <end position="393"/>
    </location>
</feature>
<feature type="active site" evidence="1">
    <location>
        <position position="166"/>
    </location>
</feature>
<dbReference type="EC" id="2.3.1.74"/>
<dbReference type="EMBL" id="AJ297790">
    <property type="protein sequence ID" value="CAC14060.1"/>
    <property type="molecule type" value="mRNA"/>
</dbReference>
<dbReference type="SMR" id="Q9FSB8"/>
<dbReference type="UniPathway" id="UPA00154"/>
<dbReference type="GO" id="GO:0016210">
    <property type="term" value="F:naringenin-chalcone synthase activity"/>
    <property type="evidence" value="ECO:0007669"/>
    <property type="project" value="UniProtKB-EC"/>
</dbReference>
<dbReference type="GO" id="GO:0009813">
    <property type="term" value="P:flavonoid biosynthetic process"/>
    <property type="evidence" value="ECO:0007669"/>
    <property type="project" value="UniProtKB-UniPathway"/>
</dbReference>
<dbReference type="GO" id="GO:0030639">
    <property type="term" value="P:polyketide biosynthetic process"/>
    <property type="evidence" value="ECO:0007669"/>
    <property type="project" value="TreeGrafter"/>
</dbReference>
<dbReference type="CDD" id="cd00831">
    <property type="entry name" value="CHS_like"/>
    <property type="match status" value="1"/>
</dbReference>
<dbReference type="FunFam" id="3.40.47.10:FF:000014">
    <property type="entry name" value="Chalcone synthase 1"/>
    <property type="match status" value="1"/>
</dbReference>
<dbReference type="FunFam" id="3.40.47.10:FF:000025">
    <property type="entry name" value="Chalcone synthase 2"/>
    <property type="match status" value="1"/>
</dbReference>
<dbReference type="Gene3D" id="3.40.47.10">
    <property type="match status" value="2"/>
</dbReference>
<dbReference type="InterPro" id="IPR012328">
    <property type="entry name" value="Chalcone/stilbene_synt_C"/>
</dbReference>
<dbReference type="InterPro" id="IPR001099">
    <property type="entry name" value="Chalcone/stilbene_synt_N"/>
</dbReference>
<dbReference type="InterPro" id="IPR018088">
    <property type="entry name" value="Chalcone/stilbene_synthase_AS"/>
</dbReference>
<dbReference type="InterPro" id="IPR011141">
    <property type="entry name" value="Polyketide_synthase_type-III"/>
</dbReference>
<dbReference type="InterPro" id="IPR016039">
    <property type="entry name" value="Thiolase-like"/>
</dbReference>
<dbReference type="PANTHER" id="PTHR11877:SF14">
    <property type="entry name" value="CHALCONE SYNTHASE"/>
    <property type="match status" value="1"/>
</dbReference>
<dbReference type="PANTHER" id="PTHR11877">
    <property type="entry name" value="HYDROXYMETHYLGLUTARYL-COA SYNTHASE"/>
    <property type="match status" value="1"/>
</dbReference>
<dbReference type="Pfam" id="PF02797">
    <property type="entry name" value="Chal_sti_synt_C"/>
    <property type="match status" value="1"/>
</dbReference>
<dbReference type="Pfam" id="PF00195">
    <property type="entry name" value="Chal_sti_synt_N"/>
    <property type="match status" value="1"/>
</dbReference>
<dbReference type="PIRSF" id="PIRSF000451">
    <property type="entry name" value="PKS_III"/>
    <property type="match status" value="1"/>
</dbReference>
<dbReference type="SUPFAM" id="SSF53901">
    <property type="entry name" value="Thiolase-like"/>
    <property type="match status" value="2"/>
</dbReference>
<dbReference type="PROSITE" id="PS00441">
    <property type="entry name" value="CHALCONE_SYNTH"/>
    <property type="match status" value="1"/>
</dbReference>